<feature type="chain" id="PRO_0000380483" description="DNA ligase">
    <location>
        <begin position="1"/>
        <end position="652"/>
    </location>
</feature>
<feature type="domain" description="BRCT" evidence="1">
    <location>
        <begin position="577"/>
        <end position="652"/>
    </location>
</feature>
<feature type="active site" description="N6-AMP-lysine intermediate" evidence="1">
    <location>
        <position position="109"/>
    </location>
</feature>
<feature type="binding site" evidence="1">
    <location>
        <begin position="29"/>
        <end position="33"/>
    </location>
    <ligand>
        <name>NAD(+)</name>
        <dbReference type="ChEBI" id="CHEBI:57540"/>
    </ligand>
</feature>
<feature type="binding site" evidence="1">
    <location>
        <begin position="78"/>
        <end position="79"/>
    </location>
    <ligand>
        <name>NAD(+)</name>
        <dbReference type="ChEBI" id="CHEBI:57540"/>
    </ligand>
</feature>
<feature type="binding site" evidence="1">
    <location>
        <position position="107"/>
    </location>
    <ligand>
        <name>NAD(+)</name>
        <dbReference type="ChEBI" id="CHEBI:57540"/>
    </ligand>
</feature>
<feature type="binding site" evidence="1">
    <location>
        <position position="130"/>
    </location>
    <ligand>
        <name>NAD(+)</name>
        <dbReference type="ChEBI" id="CHEBI:57540"/>
    </ligand>
</feature>
<feature type="binding site" evidence="1">
    <location>
        <position position="164"/>
    </location>
    <ligand>
        <name>NAD(+)</name>
        <dbReference type="ChEBI" id="CHEBI:57540"/>
    </ligand>
</feature>
<feature type="binding site" evidence="1">
    <location>
        <position position="278"/>
    </location>
    <ligand>
        <name>NAD(+)</name>
        <dbReference type="ChEBI" id="CHEBI:57540"/>
    </ligand>
</feature>
<feature type="binding site" evidence="1">
    <location>
        <position position="302"/>
    </location>
    <ligand>
        <name>NAD(+)</name>
        <dbReference type="ChEBI" id="CHEBI:57540"/>
    </ligand>
</feature>
<feature type="binding site" evidence="1">
    <location>
        <position position="395"/>
    </location>
    <ligand>
        <name>Zn(2+)</name>
        <dbReference type="ChEBI" id="CHEBI:29105"/>
    </ligand>
</feature>
<feature type="binding site" evidence="1">
    <location>
        <position position="398"/>
    </location>
    <ligand>
        <name>Zn(2+)</name>
        <dbReference type="ChEBI" id="CHEBI:29105"/>
    </ligand>
</feature>
<feature type="binding site" evidence="1">
    <location>
        <position position="413"/>
    </location>
    <ligand>
        <name>Zn(2+)</name>
        <dbReference type="ChEBI" id="CHEBI:29105"/>
    </ligand>
</feature>
<feature type="binding site" evidence="1">
    <location>
        <position position="418"/>
    </location>
    <ligand>
        <name>Zn(2+)</name>
        <dbReference type="ChEBI" id="CHEBI:29105"/>
    </ligand>
</feature>
<gene>
    <name evidence="1" type="primary">ligA</name>
    <name type="ordered locus">SPCG_1163</name>
</gene>
<reference key="1">
    <citation type="journal article" date="2009" name="BMC Genomics">
        <title>Genome evolution driven by host adaptations results in a more virulent and antimicrobial-resistant Streptococcus pneumoniae serotype 14.</title>
        <authorList>
            <person name="Ding F."/>
            <person name="Tang P."/>
            <person name="Hsu M.-H."/>
            <person name="Cui P."/>
            <person name="Hu S."/>
            <person name="Yu J."/>
            <person name="Chiu C.-H."/>
        </authorList>
    </citation>
    <scope>NUCLEOTIDE SEQUENCE [LARGE SCALE GENOMIC DNA]</scope>
    <source>
        <strain>CGSP14</strain>
    </source>
</reference>
<keyword id="KW-0227">DNA damage</keyword>
<keyword id="KW-0234">DNA repair</keyword>
<keyword id="KW-0235">DNA replication</keyword>
<keyword id="KW-0436">Ligase</keyword>
<keyword id="KW-0460">Magnesium</keyword>
<keyword id="KW-0464">Manganese</keyword>
<keyword id="KW-0479">Metal-binding</keyword>
<keyword id="KW-0520">NAD</keyword>
<keyword id="KW-0862">Zinc</keyword>
<dbReference type="EC" id="6.5.1.2" evidence="1"/>
<dbReference type="EMBL" id="CP001033">
    <property type="protein sequence ID" value="ACB90415.1"/>
    <property type="molecule type" value="Genomic_DNA"/>
</dbReference>
<dbReference type="RefSeq" id="WP_001042599.1">
    <property type="nucleotide sequence ID" value="NC_010582.1"/>
</dbReference>
<dbReference type="SMR" id="B2IPZ1"/>
<dbReference type="KEGG" id="spw:SPCG_1163"/>
<dbReference type="HOGENOM" id="CLU_007764_2_1_9"/>
<dbReference type="GO" id="GO:0005829">
    <property type="term" value="C:cytosol"/>
    <property type="evidence" value="ECO:0007669"/>
    <property type="project" value="TreeGrafter"/>
</dbReference>
<dbReference type="GO" id="GO:0003677">
    <property type="term" value="F:DNA binding"/>
    <property type="evidence" value="ECO:0007669"/>
    <property type="project" value="InterPro"/>
</dbReference>
<dbReference type="GO" id="GO:0003911">
    <property type="term" value="F:DNA ligase (NAD+) activity"/>
    <property type="evidence" value="ECO:0007669"/>
    <property type="project" value="UniProtKB-UniRule"/>
</dbReference>
<dbReference type="GO" id="GO:0046872">
    <property type="term" value="F:metal ion binding"/>
    <property type="evidence" value="ECO:0007669"/>
    <property type="project" value="UniProtKB-KW"/>
</dbReference>
<dbReference type="GO" id="GO:0006281">
    <property type="term" value="P:DNA repair"/>
    <property type="evidence" value="ECO:0007669"/>
    <property type="project" value="UniProtKB-KW"/>
</dbReference>
<dbReference type="GO" id="GO:0006260">
    <property type="term" value="P:DNA replication"/>
    <property type="evidence" value="ECO:0007669"/>
    <property type="project" value="UniProtKB-KW"/>
</dbReference>
<dbReference type="CDD" id="cd17748">
    <property type="entry name" value="BRCT_DNA_ligase_like"/>
    <property type="match status" value="1"/>
</dbReference>
<dbReference type="CDD" id="cd00114">
    <property type="entry name" value="LIGANc"/>
    <property type="match status" value="1"/>
</dbReference>
<dbReference type="FunFam" id="1.10.150.20:FF:000006">
    <property type="entry name" value="DNA ligase"/>
    <property type="match status" value="1"/>
</dbReference>
<dbReference type="FunFam" id="1.10.150.20:FF:000007">
    <property type="entry name" value="DNA ligase"/>
    <property type="match status" value="1"/>
</dbReference>
<dbReference type="FunFam" id="1.10.287.610:FF:000002">
    <property type="entry name" value="DNA ligase"/>
    <property type="match status" value="1"/>
</dbReference>
<dbReference type="FunFam" id="2.40.50.140:FF:000012">
    <property type="entry name" value="DNA ligase"/>
    <property type="match status" value="1"/>
</dbReference>
<dbReference type="FunFam" id="3.30.470.30:FF:000001">
    <property type="entry name" value="DNA ligase"/>
    <property type="match status" value="1"/>
</dbReference>
<dbReference type="Gene3D" id="6.20.10.30">
    <property type="match status" value="1"/>
</dbReference>
<dbReference type="Gene3D" id="1.10.150.20">
    <property type="entry name" value="5' to 3' exonuclease, C-terminal subdomain"/>
    <property type="match status" value="2"/>
</dbReference>
<dbReference type="Gene3D" id="3.40.50.10190">
    <property type="entry name" value="BRCT domain"/>
    <property type="match status" value="1"/>
</dbReference>
<dbReference type="Gene3D" id="3.30.470.30">
    <property type="entry name" value="DNA ligase/mRNA capping enzyme"/>
    <property type="match status" value="1"/>
</dbReference>
<dbReference type="Gene3D" id="1.10.287.610">
    <property type="entry name" value="Helix hairpin bin"/>
    <property type="match status" value="1"/>
</dbReference>
<dbReference type="Gene3D" id="2.40.50.140">
    <property type="entry name" value="Nucleic acid-binding proteins"/>
    <property type="match status" value="1"/>
</dbReference>
<dbReference type="HAMAP" id="MF_01588">
    <property type="entry name" value="DNA_ligase_A"/>
    <property type="match status" value="1"/>
</dbReference>
<dbReference type="InterPro" id="IPR001357">
    <property type="entry name" value="BRCT_dom"/>
</dbReference>
<dbReference type="InterPro" id="IPR036420">
    <property type="entry name" value="BRCT_dom_sf"/>
</dbReference>
<dbReference type="InterPro" id="IPR041663">
    <property type="entry name" value="DisA/LigA_HHH"/>
</dbReference>
<dbReference type="InterPro" id="IPR001679">
    <property type="entry name" value="DNA_ligase"/>
</dbReference>
<dbReference type="InterPro" id="IPR018239">
    <property type="entry name" value="DNA_ligase_AS"/>
</dbReference>
<dbReference type="InterPro" id="IPR033136">
    <property type="entry name" value="DNA_ligase_CS"/>
</dbReference>
<dbReference type="InterPro" id="IPR013839">
    <property type="entry name" value="DNAligase_adenylation"/>
</dbReference>
<dbReference type="InterPro" id="IPR013840">
    <property type="entry name" value="DNAligase_N"/>
</dbReference>
<dbReference type="InterPro" id="IPR003583">
    <property type="entry name" value="Hlx-hairpin-Hlx_DNA-bd_motif"/>
</dbReference>
<dbReference type="InterPro" id="IPR012340">
    <property type="entry name" value="NA-bd_OB-fold"/>
</dbReference>
<dbReference type="InterPro" id="IPR004150">
    <property type="entry name" value="NAD_DNA_ligase_OB"/>
</dbReference>
<dbReference type="InterPro" id="IPR010994">
    <property type="entry name" value="RuvA_2-like"/>
</dbReference>
<dbReference type="InterPro" id="IPR004149">
    <property type="entry name" value="Znf_DNAligase_C4"/>
</dbReference>
<dbReference type="NCBIfam" id="TIGR00575">
    <property type="entry name" value="dnlj"/>
    <property type="match status" value="1"/>
</dbReference>
<dbReference type="NCBIfam" id="NF005932">
    <property type="entry name" value="PRK07956.1"/>
    <property type="match status" value="1"/>
</dbReference>
<dbReference type="PANTHER" id="PTHR23389">
    <property type="entry name" value="CHROMOSOME TRANSMISSION FIDELITY FACTOR 18"/>
    <property type="match status" value="1"/>
</dbReference>
<dbReference type="PANTHER" id="PTHR23389:SF9">
    <property type="entry name" value="DNA LIGASE"/>
    <property type="match status" value="1"/>
</dbReference>
<dbReference type="Pfam" id="PF00533">
    <property type="entry name" value="BRCT"/>
    <property type="match status" value="1"/>
</dbReference>
<dbReference type="Pfam" id="PF01653">
    <property type="entry name" value="DNA_ligase_aden"/>
    <property type="match status" value="1"/>
</dbReference>
<dbReference type="Pfam" id="PF03120">
    <property type="entry name" value="DNA_ligase_OB"/>
    <property type="match status" value="1"/>
</dbReference>
<dbReference type="Pfam" id="PF03119">
    <property type="entry name" value="DNA_ligase_ZBD"/>
    <property type="match status" value="1"/>
</dbReference>
<dbReference type="Pfam" id="PF12826">
    <property type="entry name" value="HHH_2"/>
    <property type="match status" value="1"/>
</dbReference>
<dbReference type="Pfam" id="PF14520">
    <property type="entry name" value="HHH_5"/>
    <property type="match status" value="1"/>
</dbReference>
<dbReference type="PIRSF" id="PIRSF001604">
    <property type="entry name" value="LigA"/>
    <property type="match status" value="1"/>
</dbReference>
<dbReference type="SMART" id="SM00292">
    <property type="entry name" value="BRCT"/>
    <property type="match status" value="1"/>
</dbReference>
<dbReference type="SMART" id="SM00278">
    <property type="entry name" value="HhH1"/>
    <property type="match status" value="2"/>
</dbReference>
<dbReference type="SMART" id="SM00532">
    <property type="entry name" value="LIGANc"/>
    <property type="match status" value="1"/>
</dbReference>
<dbReference type="SUPFAM" id="SSF52113">
    <property type="entry name" value="BRCT domain"/>
    <property type="match status" value="1"/>
</dbReference>
<dbReference type="SUPFAM" id="SSF56091">
    <property type="entry name" value="DNA ligase/mRNA capping enzyme, catalytic domain"/>
    <property type="match status" value="1"/>
</dbReference>
<dbReference type="SUPFAM" id="SSF50249">
    <property type="entry name" value="Nucleic acid-binding proteins"/>
    <property type="match status" value="1"/>
</dbReference>
<dbReference type="SUPFAM" id="SSF47781">
    <property type="entry name" value="RuvA domain 2-like"/>
    <property type="match status" value="1"/>
</dbReference>
<dbReference type="PROSITE" id="PS50172">
    <property type="entry name" value="BRCT"/>
    <property type="match status" value="1"/>
</dbReference>
<dbReference type="PROSITE" id="PS01055">
    <property type="entry name" value="DNA_LIGASE_N1"/>
    <property type="match status" value="1"/>
</dbReference>
<dbReference type="PROSITE" id="PS01056">
    <property type="entry name" value="DNA_LIGASE_N2"/>
    <property type="match status" value="1"/>
</dbReference>
<organism>
    <name type="scientific">Streptococcus pneumoniae (strain CGSP14)</name>
    <dbReference type="NCBI Taxonomy" id="516950"/>
    <lineage>
        <taxon>Bacteria</taxon>
        <taxon>Bacillati</taxon>
        <taxon>Bacillota</taxon>
        <taxon>Bacilli</taxon>
        <taxon>Lactobacillales</taxon>
        <taxon>Streptococcaceae</taxon>
        <taxon>Streptococcus</taxon>
    </lineage>
</organism>
<name>DNLJ_STRPS</name>
<protein>
    <recommendedName>
        <fullName evidence="1">DNA ligase</fullName>
        <ecNumber evidence="1">6.5.1.2</ecNumber>
    </recommendedName>
    <alternativeName>
        <fullName evidence="1">Polydeoxyribonucleotide synthase [NAD(+)]</fullName>
    </alternativeName>
</protein>
<evidence type="ECO:0000255" key="1">
    <source>
        <dbReference type="HAMAP-Rule" id="MF_01588"/>
    </source>
</evidence>
<comment type="function">
    <text evidence="1">DNA ligase that catalyzes the formation of phosphodiester linkages between 5'-phosphoryl and 3'-hydroxyl groups in double-stranded DNA using NAD as a coenzyme and as the energy source for the reaction. It is essential for DNA replication and repair of damaged DNA.</text>
</comment>
<comment type="catalytic activity">
    <reaction evidence="1">
        <text>NAD(+) + (deoxyribonucleotide)n-3'-hydroxyl + 5'-phospho-(deoxyribonucleotide)m = (deoxyribonucleotide)n+m + AMP + beta-nicotinamide D-nucleotide.</text>
        <dbReference type="EC" id="6.5.1.2"/>
    </reaction>
</comment>
<comment type="cofactor">
    <cofactor evidence="1">
        <name>Mg(2+)</name>
        <dbReference type="ChEBI" id="CHEBI:18420"/>
    </cofactor>
    <cofactor evidence="1">
        <name>Mn(2+)</name>
        <dbReference type="ChEBI" id="CHEBI:29035"/>
    </cofactor>
</comment>
<comment type="similarity">
    <text evidence="1">Belongs to the NAD-dependent DNA ligase family. LigA subfamily.</text>
</comment>
<sequence length="652" mass="72270">MNKRMNELVALLNRYATEYYTSDNPSVSDSEYDRLYRELVELETAYPEQVLADSPTHRVGGKVLDGFEKYSHQYPLYSLQDAFSREELDAFDARVRKEVAHPTYICELKIDGLSISLTYEKGILVAGVTRGDGSIGENITENLKRVKDIPLTLPEELDITVRGECYMPRASFDQVNQVRQENGEPEFANPRNAAAGTLRQLDTAVVAKRNLATFLYQEASPSTRDSQEKGLKYLEQLGFVVNPKRILAENIDEIWNFIQEVGQERENLPYDIDGVVIKVNDLASQEELGFTVKAPKWAVAYKFPAEEKEAQLLSVDWTVGRTGVVTPTANLTPVQLAGTTVSRATLHNVDYIAEKDIRKDDTVIVYKAGDIIPAVLRVVESKRVSEEKLDIPTNCPSCNSDLLHFEDEVALRCINPRCPAQIMEGLIHFASRDAMNITGLGPSIVEKLFAANLVKDVADIYRLQEEDFLLLEGVKEKSAAKLYQAIQASKENSAEKLLFGLGIRHVGSKVSQLLLQYFHSIENLSQADSEEVASIESLGGVIAKSLQTYFATEGSEILLRELKETGVNLDYKGQTVVADAALSGLTVVLTGKLERLKRSEAKSKLESLGAKVTGSISKKTDLVVVGADAGSKLQKAQELGIQVRDEAWLESL</sequence>
<proteinExistence type="inferred from homology"/>
<accession>B2IPZ1</accession>